<keyword id="KW-1185">Reference proteome</keyword>
<keyword id="KW-0687">Ribonucleoprotein</keyword>
<keyword id="KW-0689">Ribosomal protein</keyword>
<dbReference type="EMBL" id="CP001022">
    <property type="protein sequence ID" value="ACB59567.1"/>
    <property type="molecule type" value="Genomic_DNA"/>
</dbReference>
<dbReference type="SMR" id="B1YGT4"/>
<dbReference type="STRING" id="262543.Exig_0080"/>
<dbReference type="KEGG" id="esi:Exig_0080"/>
<dbReference type="eggNOG" id="COG0267">
    <property type="taxonomic scope" value="Bacteria"/>
</dbReference>
<dbReference type="HOGENOM" id="CLU_190949_0_1_9"/>
<dbReference type="OrthoDB" id="9801333at2"/>
<dbReference type="Proteomes" id="UP000001681">
    <property type="component" value="Chromosome"/>
</dbReference>
<dbReference type="GO" id="GO:0005737">
    <property type="term" value="C:cytoplasm"/>
    <property type="evidence" value="ECO:0007669"/>
    <property type="project" value="UniProtKB-ARBA"/>
</dbReference>
<dbReference type="GO" id="GO:1990904">
    <property type="term" value="C:ribonucleoprotein complex"/>
    <property type="evidence" value="ECO:0007669"/>
    <property type="project" value="UniProtKB-KW"/>
</dbReference>
<dbReference type="GO" id="GO:0005840">
    <property type="term" value="C:ribosome"/>
    <property type="evidence" value="ECO:0007669"/>
    <property type="project" value="UniProtKB-KW"/>
</dbReference>
<dbReference type="GO" id="GO:0003735">
    <property type="term" value="F:structural constituent of ribosome"/>
    <property type="evidence" value="ECO:0007669"/>
    <property type="project" value="InterPro"/>
</dbReference>
<dbReference type="GO" id="GO:0006412">
    <property type="term" value="P:translation"/>
    <property type="evidence" value="ECO:0007669"/>
    <property type="project" value="UniProtKB-UniRule"/>
</dbReference>
<dbReference type="Gene3D" id="2.20.28.120">
    <property type="entry name" value="Ribosomal protein L33"/>
    <property type="match status" value="1"/>
</dbReference>
<dbReference type="HAMAP" id="MF_00294">
    <property type="entry name" value="Ribosomal_bL33"/>
    <property type="match status" value="1"/>
</dbReference>
<dbReference type="InterPro" id="IPR001705">
    <property type="entry name" value="Ribosomal_bL33"/>
</dbReference>
<dbReference type="InterPro" id="IPR018264">
    <property type="entry name" value="Ribosomal_bL33_CS"/>
</dbReference>
<dbReference type="InterPro" id="IPR038584">
    <property type="entry name" value="Ribosomal_bL33_sf"/>
</dbReference>
<dbReference type="InterPro" id="IPR011332">
    <property type="entry name" value="Ribosomal_zn-bd"/>
</dbReference>
<dbReference type="NCBIfam" id="NF001764">
    <property type="entry name" value="PRK00504.1"/>
    <property type="match status" value="1"/>
</dbReference>
<dbReference type="NCBIfam" id="TIGR01023">
    <property type="entry name" value="rpmG_bact"/>
    <property type="match status" value="1"/>
</dbReference>
<dbReference type="Pfam" id="PF00471">
    <property type="entry name" value="Ribosomal_L33"/>
    <property type="match status" value="1"/>
</dbReference>
<dbReference type="SUPFAM" id="SSF57829">
    <property type="entry name" value="Zn-binding ribosomal proteins"/>
    <property type="match status" value="1"/>
</dbReference>
<dbReference type="PROSITE" id="PS00582">
    <property type="entry name" value="RIBOSOMAL_L33"/>
    <property type="match status" value="1"/>
</dbReference>
<sequence length="48" mass="5512">MAKKVGLACDICGARDYTTMKKEDVSIRLELKKFCRRCNAHTIHKEAK</sequence>
<protein>
    <recommendedName>
        <fullName evidence="1">Large ribosomal subunit protein bL33A</fullName>
    </recommendedName>
    <alternativeName>
        <fullName evidence="1">50S ribosomal protein L33 1</fullName>
    </alternativeName>
</protein>
<name>RL331_EXIS2</name>
<reference key="1">
    <citation type="submission" date="2008-04" db="EMBL/GenBank/DDBJ databases">
        <title>Complete sequence of chromosome of Exiguobacterium sibiricum 255-15.</title>
        <authorList>
            <consortium name="US DOE Joint Genome Institute"/>
            <person name="Copeland A."/>
            <person name="Lucas S."/>
            <person name="Lapidus A."/>
            <person name="Glavina del Rio T."/>
            <person name="Dalin E."/>
            <person name="Tice H."/>
            <person name="Bruce D."/>
            <person name="Goodwin L."/>
            <person name="Pitluck S."/>
            <person name="Kiss H."/>
            <person name="Chertkov O."/>
            <person name="Monk C."/>
            <person name="Brettin T."/>
            <person name="Detter J.C."/>
            <person name="Han C."/>
            <person name="Kuske C.R."/>
            <person name="Schmutz J."/>
            <person name="Larimer F."/>
            <person name="Land M."/>
            <person name="Hauser L."/>
            <person name="Kyrpides N."/>
            <person name="Mikhailova N."/>
            <person name="Vishnivetskaya T."/>
            <person name="Rodrigues D.F."/>
            <person name="Gilichinsky D."/>
            <person name="Tiedje J."/>
            <person name="Richardson P."/>
        </authorList>
    </citation>
    <scope>NUCLEOTIDE SEQUENCE [LARGE SCALE GENOMIC DNA]</scope>
    <source>
        <strain>DSM 17290 / CCUG 55495 / CIP 109462 / JCM 13490 / 255-15</strain>
    </source>
</reference>
<organism>
    <name type="scientific">Exiguobacterium sibiricum (strain DSM 17290 / CCUG 55495 / CIP 109462 / JCM 13490 / 255-15)</name>
    <dbReference type="NCBI Taxonomy" id="262543"/>
    <lineage>
        <taxon>Bacteria</taxon>
        <taxon>Bacillati</taxon>
        <taxon>Bacillota</taxon>
        <taxon>Bacilli</taxon>
        <taxon>Bacillales</taxon>
        <taxon>Bacillales Family XII. Incertae Sedis</taxon>
        <taxon>Exiguobacterium</taxon>
    </lineage>
</organism>
<gene>
    <name evidence="1" type="primary">rpmG1</name>
    <name type="ordered locus">Exig_0080</name>
</gene>
<proteinExistence type="inferred from homology"/>
<accession>B1YGT4</accession>
<evidence type="ECO:0000255" key="1">
    <source>
        <dbReference type="HAMAP-Rule" id="MF_00294"/>
    </source>
</evidence>
<comment type="similarity">
    <text evidence="1">Belongs to the bacterial ribosomal protein bL33 family.</text>
</comment>
<feature type="chain" id="PRO_0000356457" description="Large ribosomal subunit protein bL33A">
    <location>
        <begin position="1"/>
        <end position="48"/>
    </location>
</feature>